<sequence>MLCLGAMSERSERYLVTSALPYANGPLHVGHMVGAYLPADIFVRYLRMRGEDVVYVCGTDEHGVPITLTAEREGKSPREVVDYWYAHMKETFARFSISFDNFSRTSTPLHAQNTQLFYRKLKEGGYISEAESKQMYSPTEGRFLPDRYVEGTCPVCGYKEARGDQCDNCGSWYEAYELIEPHSKITGGPVEVRTTTHLYLDLPKFAGRLKDWISSQRHWREPVKNFIISMIEGGLERRPITRDISWGVPVPEPGFEDKRFYVWFDAPIGYVSSTQEWAERTGEPDRWREYWQDPGTRLIHFIGKDNTVFHTTMWPAMLMGVAEDGEEPYILPYDVPANEFMNLEVPVEGERRAVQMSTSRNLAVWLHEALDRFPADPLRFYLASTLPETGDVVFSWREFQSRVNSDLIGNLGNYINRVLSFTERYFGGTLERPSRLPAAAQEAFEDFRALEESYGRKMLDERPREAFAELLALGRRANRFFDAAAPWKTRKEDPERARADLYACCALLGSIAYHASPYVPEAMERLQGFFEGPVERITDLKPPGAYRSAGARPLFSRVEDEAVARAEEQLSRALLGR</sequence>
<keyword id="KW-0030">Aminoacyl-tRNA synthetase</keyword>
<keyword id="KW-0067">ATP-binding</keyword>
<keyword id="KW-0963">Cytoplasm</keyword>
<keyword id="KW-0436">Ligase</keyword>
<keyword id="KW-0479">Metal-binding</keyword>
<keyword id="KW-0547">Nucleotide-binding</keyword>
<keyword id="KW-0648">Protein biosynthesis</keyword>
<keyword id="KW-1185">Reference proteome</keyword>
<keyword id="KW-0862">Zinc</keyword>
<accession>Q1AST1</accession>
<reference key="1">
    <citation type="submission" date="2006-06" db="EMBL/GenBank/DDBJ databases">
        <title>Complete sequence of Rubrobacter xylanophilus DSM 9941.</title>
        <authorList>
            <consortium name="US DOE Joint Genome Institute"/>
            <person name="Copeland A."/>
            <person name="Lucas S."/>
            <person name="Lapidus A."/>
            <person name="Barry K."/>
            <person name="Detter J.C."/>
            <person name="Glavina del Rio T."/>
            <person name="Hammon N."/>
            <person name="Israni S."/>
            <person name="Dalin E."/>
            <person name="Tice H."/>
            <person name="Pitluck S."/>
            <person name="Munk A.C."/>
            <person name="Brettin T."/>
            <person name="Bruce D."/>
            <person name="Han C."/>
            <person name="Tapia R."/>
            <person name="Gilna P."/>
            <person name="Schmutz J."/>
            <person name="Larimer F."/>
            <person name="Land M."/>
            <person name="Hauser L."/>
            <person name="Kyrpides N."/>
            <person name="Lykidis A."/>
            <person name="da Costa M.S."/>
            <person name="Rainey F.A."/>
            <person name="Empadinhas N."/>
            <person name="Jolivet E."/>
            <person name="Battista J.R."/>
            <person name="Richardson P."/>
        </authorList>
    </citation>
    <scope>NUCLEOTIDE SEQUENCE [LARGE SCALE GENOMIC DNA]</scope>
    <source>
        <strain>DSM 9941 / JCM 11954 / NBRC 16129 / PRD-1</strain>
    </source>
</reference>
<comment type="function">
    <text evidence="1">Is required not only for elongation of protein synthesis but also for the initiation of all mRNA translation through initiator tRNA(fMet) aminoacylation.</text>
</comment>
<comment type="catalytic activity">
    <reaction evidence="1">
        <text>tRNA(Met) + L-methionine + ATP = L-methionyl-tRNA(Met) + AMP + diphosphate</text>
        <dbReference type="Rhea" id="RHEA:13481"/>
        <dbReference type="Rhea" id="RHEA-COMP:9667"/>
        <dbReference type="Rhea" id="RHEA-COMP:9698"/>
        <dbReference type="ChEBI" id="CHEBI:30616"/>
        <dbReference type="ChEBI" id="CHEBI:33019"/>
        <dbReference type="ChEBI" id="CHEBI:57844"/>
        <dbReference type="ChEBI" id="CHEBI:78442"/>
        <dbReference type="ChEBI" id="CHEBI:78530"/>
        <dbReference type="ChEBI" id="CHEBI:456215"/>
        <dbReference type="EC" id="6.1.1.10"/>
    </reaction>
</comment>
<comment type="cofactor">
    <cofactor evidence="1">
        <name>Zn(2+)</name>
        <dbReference type="ChEBI" id="CHEBI:29105"/>
    </cofactor>
    <text evidence="1">Binds 1 zinc ion per subunit.</text>
</comment>
<comment type="subunit">
    <text evidence="1">Monomer.</text>
</comment>
<comment type="subcellular location">
    <subcellularLocation>
        <location evidence="1">Cytoplasm</location>
    </subcellularLocation>
</comment>
<comment type="similarity">
    <text evidence="1">Belongs to the class-I aminoacyl-tRNA synthetase family. MetG type 1 subfamily.</text>
</comment>
<name>SYM_RUBXD</name>
<protein>
    <recommendedName>
        <fullName evidence="1">Methionine--tRNA ligase</fullName>
        <ecNumber evidence="1">6.1.1.10</ecNumber>
    </recommendedName>
    <alternativeName>
        <fullName evidence="1">Methionyl-tRNA synthetase</fullName>
        <shortName evidence="1">MetRS</shortName>
    </alternativeName>
</protein>
<organism>
    <name type="scientific">Rubrobacter xylanophilus (strain DSM 9941 / JCM 11954 / NBRC 16129 / PRD-1)</name>
    <dbReference type="NCBI Taxonomy" id="266117"/>
    <lineage>
        <taxon>Bacteria</taxon>
        <taxon>Bacillati</taxon>
        <taxon>Actinomycetota</taxon>
        <taxon>Rubrobacteria</taxon>
        <taxon>Rubrobacterales</taxon>
        <taxon>Rubrobacteraceae</taxon>
        <taxon>Rubrobacter</taxon>
    </lineage>
</organism>
<feature type="chain" id="PRO_0000331892" description="Methionine--tRNA ligase">
    <location>
        <begin position="1"/>
        <end position="577"/>
    </location>
</feature>
<feature type="short sequence motif" description="'HIGH' region">
    <location>
        <begin position="21"/>
        <end position="31"/>
    </location>
</feature>
<feature type="short sequence motif" description="'KMSKS' region">
    <location>
        <begin position="355"/>
        <end position="359"/>
    </location>
</feature>
<feature type="binding site" evidence="1">
    <location>
        <position position="153"/>
    </location>
    <ligand>
        <name>Zn(2+)</name>
        <dbReference type="ChEBI" id="CHEBI:29105"/>
    </ligand>
</feature>
<feature type="binding site" evidence="1">
    <location>
        <position position="156"/>
    </location>
    <ligand>
        <name>Zn(2+)</name>
        <dbReference type="ChEBI" id="CHEBI:29105"/>
    </ligand>
</feature>
<feature type="binding site" evidence="1">
    <location>
        <position position="166"/>
    </location>
    <ligand>
        <name>Zn(2+)</name>
        <dbReference type="ChEBI" id="CHEBI:29105"/>
    </ligand>
</feature>
<feature type="binding site" evidence="1">
    <location>
        <position position="169"/>
    </location>
    <ligand>
        <name>Zn(2+)</name>
        <dbReference type="ChEBI" id="CHEBI:29105"/>
    </ligand>
</feature>
<feature type="binding site" evidence="1">
    <location>
        <position position="358"/>
    </location>
    <ligand>
        <name>ATP</name>
        <dbReference type="ChEBI" id="CHEBI:30616"/>
    </ligand>
</feature>
<gene>
    <name evidence="1" type="primary">metG</name>
    <name type="ordered locus">Rxyl_2630</name>
</gene>
<proteinExistence type="inferred from homology"/>
<dbReference type="EC" id="6.1.1.10" evidence="1"/>
<dbReference type="EMBL" id="CP000386">
    <property type="protein sequence ID" value="ABG05547.1"/>
    <property type="molecule type" value="Genomic_DNA"/>
</dbReference>
<dbReference type="SMR" id="Q1AST1"/>
<dbReference type="STRING" id="266117.Rxyl_2630"/>
<dbReference type="KEGG" id="rxy:Rxyl_2630"/>
<dbReference type="eggNOG" id="COG0143">
    <property type="taxonomic scope" value="Bacteria"/>
</dbReference>
<dbReference type="HOGENOM" id="CLU_009710_1_2_11"/>
<dbReference type="PhylomeDB" id="Q1AST1"/>
<dbReference type="Proteomes" id="UP000006637">
    <property type="component" value="Chromosome"/>
</dbReference>
<dbReference type="GO" id="GO:0005829">
    <property type="term" value="C:cytosol"/>
    <property type="evidence" value="ECO:0007669"/>
    <property type="project" value="TreeGrafter"/>
</dbReference>
<dbReference type="GO" id="GO:0005524">
    <property type="term" value="F:ATP binding"/>
    <property type="evidence" value="ECO:0007669"/>
    <property type="project" value="UniProtKB-UniRule"/>
</dbReference>
<dbReference type="GO" id="GO:0046872">
    <property type="term" value="F:metal ion binding"/>
    <property type="evidence" value="ECO:0007669"/>
    <property type="project" value="UniProtKB-KW"/>
</dbReference>
<dbReference type="GO" id="GO:0004825">
    <property type="term" value="F:methionine-tRNA ligase activity"/>
    <property type="evidence" value="ECO:0007669"/>
    <property type="project" value="UniProtKB-UniRule"/>
</dbReference>
<dbReference type="GO" id="GO:0006431">
    <property type="term" value="P:methionyl-tRNA aminoacylation"/>
    <property type="evidence" value="ECO:0007669"/>
    <property type="project" value="UniProtKB-UniRule"/>
</dbReference>
<dbReference type="CDD" id="cd07957">
    <property type="entry name" value="Anticodon_Ia_Met"/>
    <property type="match status" value="1"/>
</dbReference>
<dbReference type="CDD" id="cd00814">
    <property type="entry name" value="MetRS_core"/>
    <property type="match status" value="1"/>
</dbReference>
<dbReference type="FunFam" id="2.20.28.20:FF:000001">
    <property type="entry name" value="Methionine--tRNA ligase"/>
    <property type="match status" value="1"/>
</dbReference>
<dbReference type="Gene3D" id="3.40.50.620">
    <property type="entry name" value="HUPs"/>
    <property type="match status" value="1"/>
</dbReference>
<dbReference type="Gene3D" id="1.10.730.10">
    <property type="entry name" value="Isoleucyl-tRNA Synthetase, Domain 1"/>
    <property type="match status" value="1"/>
</dbReference>
<dbReference type="Gene3D" id="2.20.28.20">
    <property type="entry name" value="Methionyl-tRNA synthetase, Zn-domain"/>
    <property type="match status" value="1"/>
</dbReference>
<dbReference type="HAMAP" id="MF_00098">
    <property type="entry name" value="Met_tRNA_synth_type1"/>
    <property type="match status" value="1"/>
</dbReference>
<dbReference type="InterPro" id="IPR001412">
    <property type="entry name" value="aa-tRNA-synth_I_CS"/>
</dbReference>
<dbReference type="InterPro" id="IPR041872">
    <property type="entry name" value="Anticodon_Met"/>
</dbReference>
<dbReference type="InterPro" id="IPR023458">
    <property type="entry name" value="Met-tRNA_ligase_1"/>
</dbReference>
<dbReference type="InterPro" id="IPR014758">
    <property type="entry name" value="Met-tRNA_synth"/>
</dbReference>
<dbReference type="InterPro" id="IPR015413">
    <property type="entry name" value="Methionyl/Leucyl_tRNA_Synth"/>
</dbReference>
<dbReference type="InterPro" id="IPR033911">
    <property type="entry name" value="MetRS_core"/>
</dbReference>
<dbReference type="InterPro" id="IPR029038">
    <property type="entry name" value="MetRS_Zn"/>
</dbReference>
<dbReference type="InterPro" id="IPR014729">
    <property type="entry name" value="Rossmann-like_a/b/a_fold"/>
</dbReference>
<dbReference type="InterPro" id="IPR009080">
    <property type="entry name" value="tRNAsynth_Ia_anticodon-bd"/>
</dbReference>
<dbReference type="NCBIfam" id="TIGR00398">
    <property type="entry name" value="metG"/>
    <property type="match status" value="1"/>
</dbReference>
<dbReference type="NCBIfam" id="NF001100">
    <property type="entry name" value="PRK00133.1"/>
    <property type="match status" value="1"/>
</dbReference>
<dbReference type="PANTHER" id="PTHR45765">
    <property type="entry name" value="METHIONINE--TRNA LIGASE"/>
    <property type="match status" value="1"/>
</dbReference>
<dbReference type="PANTHER" id="PTHR45765:SF1">
    <property type="entry name" value="METHIONINE--TRNA LIGASE, CYTOPLASMIC"/>
    <property type="match status" value="1"/>
</dbReference>
<dbReference type="Pfam" id="PF19303">
    <property type="entry name" value="Anticodon_3"/>
    <property type="match status" value="1"/>
</dbReference>
<dbReference type="Pfam" id="PF09334">
    <property type="entry name" value="tRNA-synt_1g"/>
    <property type="match status" value="1"/>
</dbReference>
<dbReference type="PRINTS" id="PR01041">
    <property type="entry name" value="TRNASYNTHMET"/>
</dbReference>
<dbReference type="SUPFAM" id="SSF47323">
    <property type="entry name" value="Anticodon-binding domain of a subclass of class I aminoacyl-tRNA synthetases"/>
    <property type="match status" value="1"/>
</dbReference>
<dbReference type="SUPFAM" id="SSF57770">
    <property type="entry name" value="Methionyl-tRNA synthetase (MetRS), Zn-domain"/>
    <property type="match status" value="1"/>
</dbReference>
<dbReference type="SUPFAM" id="SSF52374">
    <property type="entry name" value="Nucleotidylyl transferase"/>
    <property type="match status" value="1"/>
</dbReference>
<dbReference type="PROSITE" id="PS00178">
    <property type="entry name" value="AA_TRNA_LIGASE_I"/>
    <property type="match status" value="1"/>
</dbReference>
<evidence type="ECO:0000255" key="1">
    <source>
        <dbReference type="HAMAP-Rule" id="MF_00098"/>
    </source>
</evidence>